<proteinExistence type="predicted"/>
<protein>
    <recommendedName>
        <fullName>Uncharacterized protein R500</fullName>
    </recommendedName>
</protein>
<organismHost>
    <name type="scientific">Acanthamoeba polyphaga</name>
    <name type="common">Amoeba</name>
    <dbReference type="NCBI Taxonomy" id="5757"/>
</organismHost>
<accession>Q5UP46</accession>
<dbReference type="EMBL" id="AY653733">
    <property type="protein sequence ID" value="AAV50765.1"/>
    <property type="molecule type" value="Genomic_DNA"/>
</dbReference>
<dbReference type="KEGG" id="vg:9925131"/>
<dbReference type="OrthoDB" id="34737at10239"/>
<dbReference type="Proteomes" id="UP000001134">
    <property type="component" value="Genome"/>
</dbReference>
<keyword id="KW-1185">Reference proteome</keyword>
<name>YR500_MIMIV</name>
<organism>
    <name type="scientific">Acanthamoeba polyphaga mimivirus</name>
    <name type="common">APMV</name>
    <dbReference type="NCBI Taxonomy" id="212035"/>
    <lineage>
        <taxon>Viruses</taxon>
        <taxon>Varidnaviria</taxon>
        <taxon>Bamfordvirae</taxon>
        <taxon>Nucleocytoviricota</taxon>
        <taxon>Megaviricetes</taxon>
        <taxon>Imitervirales</taxon>
        <taxon>Mimiviridae</taxon>
        <taxon>Megamimivirinae</taxon>
        <taxon>Mimivirus</taxon>
        <taxon>Mimivirus bradfordmassiliense</taxon>
    </lineage>
</organism>
<feature type="chain" id="PRO_0000071289" description="Uncharacterized protein R500">
    <location>
        <begin position="1"/>
        <end position="185"/>
    </location>
</feature>
<reference key="1">
    <citation type="journal article" date="2004" name="Science">
        <title>The 1.2-megabase genome sequence of Mimivirus.</title>
        <authorList>
            <person name="Raoult D."/>
            <person name="Audic S."/>
            <person name="Robert C."/>
            <person name="Abergel C."/>
            <person name="Renesto P."/>
            <person name="Ogata H."/>
            <person name="La Scola B."/>
            <person name="Susan M."/>
            <person name="Claverie J.-M."/>
        </authorList>
    </citation>
    <scope>NUCLEOTIDE SEQUENCE [LARGE SCALE GENOMIC DNA]</scope>
    <source>
        <strain>Rowbotham-Bradford</strain>
    </source>
</reference>
<sequence>MLMEQFLDYIGKLLFKIFMTIFPHAYKFYLTMWKIIFSLINCIKIVYYVDHQGEIMNVTHLYYLGIMRKTQGVFFLKLYDINGCHYMGFRGNINLIDNIQPINYDSYSRKTILFSHGGNSVNFQMECLDNYYNNCKLFDDSVQELVLILKMFNVKCTHISFISLKPFSRNNVEINDVKLTDLYNL</sequence>
<gene>
    <name type="ordered locus">MIMI_R500</name>
</gene>